<comment type="function">
    <text evidence="1">Involved in unsaturated fatty acids biosynthesis. Catalyzes the dehydration of short chain beta-hydroxyacyl-ACPs and long chain saturated and unsaturated beta-hydroxyacyl-ACPs.</text>
</comment>
<comment type="catalytic activity">
    <reaction evidence="1">
        <text>a (3R)-hydroxyacyl-[ACP] = a (2E)-enoyl-[ACP] + H2O</text>
        <dbReference type="Rhea" id="RHEA:13097"/>
        <dbReference type="Rhea" id="RHEA-COMP:9925"/>
        <dbReference type="Rhea" id="RHEA-COMP:9945"/>
        <dbReference type="ChEBI" id="CHEBI:15377"/>
        <dbReference type="ChEBI" id="CHEBI:78784"/>
        <dbReference type="ChEBI" id="CHEBI:78827"/>
        <dbReference type="EC" id="4.2.1.59"/>
    </reaction>
</comment>
<comment type="subcellular location">
    <subcellularLocation>
        <location evidence="1">Cytoplasm</location>
    </subcellularLocation>
</comment>
<comment type="similarity">
    <text evidence="1">Belongs to the thioester dehydratase family. FabZ subfamily.</text>
</comment>
<protein>
    <recommendedName>
        <fullName evidence="1">3-hydroxyacyl-[acyl-carrier-protein] dehydratase FabZ</fullName>
        <ecNumber evidence="1">4.2.1.59</ecNumber>
    </recommendedName>
    <alternativeName>
        <fullName evidence="1">(3R)-hydroxymyristoyl-[acyl-carrier-protein] dehydratase</fullName>
        <shortName evidence="1">(3R)-hydroxymyristoyl-ACP dehydrase</shortName>
    </alternativeName>
    <alternativeName>
        <fullName evidence="1">Beta-hydroxyacyl-ACP dehydratase</fullName>
    </alternativeName>
</protein>
<accession>Q2YB97</accession>
<organism>
    <name type="scientific">Nitrosospira multiformis (strain ATCC 25196 / NCIMB 11849 / C 71)</name>
    <dbReference type="NCBI Taxonomy" id="323848"/>
    <lineage>
        <taxon>Bacteria</taxon>
        <taxon>Pseudomonadati</taxon>
        <taxon>Pseudomonadota</taxon>
        <taxon>Betaproteobacteria</taxon>
        <taxon>Nitrosomonadales</taxon>
        <taxon>Nitrosomonadaceae</taxon>
        <taxon>Nitrosospira</taxon>
    </lineage>
</organism>
<sequence>MDIHEILKYLPHRYPLLLVDRVLAFEPGKSLTALKNVTINEPFFTGHFPHHPVMPGVLVIEALAQAAALLTLKTSNVEADENSIYYFVGIDNARFKRPVEPGDQLILKATVLKERIGIWKYAARAEVDGRVAAEAELMCTVRPKET</sequence>
<feature type="chain" id="PRO_0000230821" description="3-hydroxyacyl-[acyl-carrier-protein] dehydratase FabZ">
    <location>
        <begin position="1"/>
        <end position="146"/>
    </location>
</feature>
<feature type="active site" evidence="1">
    <location>
        <position position="47"/>
    </location>
</feature>
<dbReference type="EC" id="4.2.1.59" evidence="1"/>
<dbReference type="EMBL" id="CP000103">
    <property type="protein sequence ID" value="ABB73974.1"/>
    <property type="molecule type" value="Genomic_DNA"/>
</dbReference>
<dbReference type="RefSeq" id="WP_011380024.1">
    <property type="nucleotide sequence ID" value="NC_007614.1"/>
</dbReference>
<dbReference type="SMR" id="Q2YB97"/>
<dbReference type="STRING" id="323848.Nmul_A0667"/>
<dbReference type="KEGG" id="nmu:Nmul_A0667"/>
<dbReference type="eggNOG" id="COG0764">
    <property type="taxonomic scope" value="Bacteria"/>
</dbReference>
<dbReference type="HOGENOM" id="CLU_078912_1_0_4"/>
<dbReference type="OrthoDB" id="9772788at2"/>
<dbReference type="Proteomes" id="UP000002718">
    <property type="component" value="Chromosome"/>
</dbReference>
<dbReference type="GO" id="GO:0005737">
    <property type="term" value="C:cytoplasm"/>
    <property type="evidence" value="ECO:0007669"/>
    <property type="project" value="UniProtKB-SubCell"/>
</dbReference>
<dbReference type="GO" id="GO:0016020">
    <property type="term" value="C:membrane"/>
    <property type="evidence" value="ECO:0007669"/>
    <property type="project" value="GOC"/>
</dbReference>
<dbReference type="GO" id="GO:0019171">
    <property type="term" value="F:(3R)-hydroxyacyl-[acyl-carrier-protein] dehydratase activity"/>
    <property type="evidence" value="ECO:0007669"/>
    <property type="project" value="UniProtKB-EC"/>
</dbReference>
<dbReference type="GO" id="GO:0006633">
    <property type="term" value="P:fatty acid biosynthetic process"/>
    <property type="evidence" value="ECO:0007669"/>
    <property type="project" value="UniProtKB-UniRule"/>
</dbReference>
<dbReference type="GO" id="GO:0009245">
    <property type="term" value="P:lipid A biosynthetic process"/>
    <property type="evidence" value="ECO:0007669"/>
    <property type="project" value="UniProtKB-UniRule"/>
</dbReference>
<dbReference type="CDD" id="cd01288">
    <property type="entry name" value="FabZ"/>
    <property type="match status" value="1"/>
</dbReference>
<dbReference type="FunFam" id="3.10.129.10:FF:000001">
    <property type="entry name" value="3-hydroxyacyl-[acyl-carrier-protein] dehydratase FabZ"/>
    <property type="match status" value="1"/>
</dbReference>
<dbReference type="Gene3D" id="3.10.129.10">
    <property type="entry name" value="Hotdog Thioesterase"/>
    <property type="match status" value="1"/>
</dbReference>
<dbReference type="HAMAP" id="MF_00406">
    <property type="entry name" value="FabZ"/>
    <property type="match status" value="1"/>
</dbReference>
<dbReference type="InterPro" id="IPR013114">
    <property type="entry name" value="FabA_FabZ"/>
</dbReference>
<dbReference type="InterPro" id="IPR010084">
    <property type="entry name" value="FabZ"/>
</dbReference>
<dbReference type="InterPro" id="IPR029069">
    <property type="entry name" value="HotDog_dom_sf"/>
</dbReference>
<dbReference type="NCBIfam" id="TIGR01750">
    <property type="entry name" value="fabZ"/>
    <property type="match status" value="1"/>
</dbReference>
<dbReference type="NCBIfam" id="NF000582">
    <property type="entry name" value="PRK00006.1"/>
    <property type="match status" value="1"/>
</dbReference>
<dbReference type="PANTHER" id="PTHR30272">
    <property type="entry name" value="3-HYDROXYACYL-[ACYL-CARRIER-PROTEIN] DEHYDRATASE"/>
    <property type="match status" value="1"/>
</dbReference>
<dbReference type="PANTHER" id="PTHR30272:SF1">
    <property type="entry name" value="3-HYDROXYACYL-[ACYL-CARRIER-PROTEIN] DEHYDRATASE"/>
    <property type="match status" value="1"/>
</dbReference>
<dbReference type="Pfam" id="PF07977">
    <property type="entry name" value="FabA"/>
    <property type="match status" value="1"/>
</dbReference>
<dbReference type="SUPFAM" id="SSF54637">
    <property type="entry name" value="Thioesterase/thiol ester dehydrase-isomerase"/>
    <property type="match status" value="1"/>
</dbReference>
<gene>
    <name evidence="1" type="primary">fabZ</name>
    <name type="ordered locus">Nmul_A0667</name>
</gene>
<name>FABZ_NITMU</name>
<reference key="1">
    <citation type="submission" date="2005-08" db="EMBL/GenBank/DDBJ databases">
        <title>Complete sequence of chromosome 1 of Nitrosospira multiformis ATCC 25196.</title>
        <authorList>
            <person name="Copeland A."/>
            <person name="Lucas S."/>
            <person name="Lapidus A."/>
            <person name="Barry K."/>
            <person name="Detter J.C."/>
            <person name="Glavina T."/>
            <person name="Hammon N."/>
            <person name="Israni S."/>
            <person name="Pitluck S."/>
            <person name="Chain P."/>
            <person name="Malfatti S."/>
            <person name="Shin M."/>
            <person name="Vergez L."/>
            <person name="Schmutz J."/>
            <person name="Larimer F."/>
            <person name="Land M."/>
            <person name="Hauser L."/>
            <person name="Kyrpides N."/>
            <person name="Lykidis A."/>
            <person name="Richardson P."/>
        </authorList>
    </citation>
    <scope>NUCLEOTIDE SEQUENCE [LARGE SCALE GENOMIC DNA]</scope>
    <source>
        <strain>ATCC 25196 / NCIMB 11849 / C 71</strain>
    </source>
</reference>
<evidence type="ECO:0000255" key="1">
    <source>
        <dbReference type="HAMAP-Rule" id="MF_00406"/>
    </source>
</evidence>
<proteinExistence type="inferred from homology"/>
<keyword id="KW-0963">Cytoplasm</keyword>
<keyword id="KW-0441">Lipid A biosynthesis</keyword>
<keyword id="KW-0444">Lipid biosynthesis</keyword>
<keyword id="KW-0443">Lipid metabolism</keyword>
<keyword id="KW-0456">Lyase</keyword>
<keyword id="KW-1185">Reference proteome</keyword>